<accession>A9BA44</accession>
<comment type="function">
    <text evidence="1">Redox regulated molecular chaperone. Protects both thermally unfolding and oxidatively damaged proteins from irreversible aggregation. Plays an important role in the bacterial defense system toward oxidative stress.</text>
</comment>
<comment type="subcellular location">
    <subcellularLocation>
        <location evidence="1">Cytoplasm</location>
    </subcellularLocation>
</comment>
<comment type="PTM">
    <text evidence="1">Under oxidizing conditions two disulfide bonds are formed involving the reactive cysteines. Under reducing conditions zinc is bound to the reactive cysteines and the protein is inactive.</text>
</comment>
<comment type="similarity">
    <text evidence="1">Belongs to the HSP33 family.</text>
</comment>
<sequence>MNDTLVRATAANGGIRLVAAITTNALKEAKSRHKLSYLTSALMGRAMSASLLLASSMKVLHGRVTLKIQSDGPIKGLTVDACRDGSVRGFLGNPSLELDLVKSKEGHHCFDFANATGKGYLHVIRDIGEGDPYSSTVELVGGGIGEDIASYLLHSEQTPSAVFVGEKIKHKELVCSGGLIAQILPKASQDRSLAELLEENCNTITSFSERLFEYKDNLSGLLKDLFYNLNPEIVKGPSARQEIKYRCKCSRDRSISALKLLGNSEIKSILNEDKKAEITCEFCKNVYQIEEEELRSLVDI</sequence>
<gene>
    <name evidence="1" type="primary">hslO</name>
    <name type="ordered locus">P9211_07751</name>
</gene>
<feature type="chain" id="PRO_1000095025" description="33 kDa chaperonin">
    <location>
        <begin position="1"/>
        <end position="300"/>
    </location>
</feature>
<feature type="disulfide bond" description="Redox-active" evidence="1">
    <location>
        <begin position="247"/>
        <end position="249"/>
    </location>
</feature>
<feature type="disulfide bond" description="Redox-active" evidence="1">
    <location>
        <begin position="280"/>
        <end position="283"/>
    </location>
</feature>
<protein>
    <recommendedName>
        <fullName evidence="1">33 kDa chaperonin</fullName>
    </recommendedName>
    <alternativeName>
        <fullName evidence="1">Heat shock protein 33 homolog</fullName>
        <shortName evidence="1">HSP33</shortName>
    </alternativeName>
</protein>
<dbReference type="EMBL" id="CP000878">
    <property type="protein sequence ID" value="ABX08706.1"/>
    <property type="molecule type" value="Genomic_DNA"/>
</dbReference>
<dbReference type="RefSeq" id="WP_012195328.1">
    <property type="nucleotide sequence ID" value="NC_009976.1"/>
</dbReference>
<dbReference type="SMR" id="A9BA44"/>
<dbReference type="STRING" id="93059.P9211_07751"/>
<dbReference type="KEGG" id="pmj:P9211_07751"/>
<dbReference type="eggNOG" id="COG1281">
    <property type="taxonomic scope" value="Bacteria"/>
</dbReference>
<dbReference type="HOGENOM" id="CLU_054493_1_0_3"/>
<dbReference type="OrthoDB" id="9776534at2"/>
<dbReference type="Proteomes" id="UP000000788">
    <property type="component" value="Chromosome"/>
</dbReference>
<dbReference type="GO" id="GO:0005737">
    <property type="term" value="C:cytoplasm"/>
    <property type="evidence" value="ECO:0007669"/>
    <property type="project" value="UniProtKB-SubCell"/>
</dbReference>
<dbReference type="GO" id="GO:0044183">
    <property type="term" value="F:protein folding chaperone"/>
    <property type="evidence" value="ECO:0007669"/>
    <property type="project" value="TreeGrafter"/>
</dbReference>
<dbReference type="GO" id="GO:0051082">
    <property type="term" value="F:unfolded protein binding"/>
    <property type="evidence" value="ECO:0007669"/>
    <property type="project" value="UniProtKB-UniRule"/>
</dbReference>
<dbReference type="GO" id="GO:0042026">
    <property type="term" value="P:protein refolding"/>
    <property type="evidence" value="ECO:0007669"/>
    <property type="project" value="TreeGrafter"/>
</dbReference>
<dbReference type="CDD" id="cd00498">
    <property type="entry name" value="Hsp33"/>
    <property type="match status" value="1"/>
</dbReference>
<dbReference type="Gene3D" id="3.55.30.10">
    <property type="entry name" value="Hsp33 domain"/>
    <property type="match status" value="1"/>
</dbReference>
<dbReference type="Gene3D" id="3.90.1280.10">
    <property type="entry name" value="HSP33 redox switch-like"/>
    <property type="match status" value="1"/>
</dbReference>
<dbReference type="HAMAP" id="MF_00117">
    <property type="entry name" value="HslO"/>
    <property type="match status" value="1"/>
</dbReference>
<dbReference type="InterPro" id="IPR000397">
    <property type="entry name" value="Heat_shock_Hsp33"/>
</dbReference>
<dbReference type="InterPro" id="IPR016154">
    <property type="entry name" value="Heat_shock_Hsp33_C"/>
</dbReference>
<dbReference type="InterPro" id="IPR016153">
    <property type="entry name" value="Heat_shock_Hsp33_N"/>
</dbReference>
<dbReference type="NCBIfam" id="NF001033">
    <property type="entry name" value="PRK00114.1"/>
    <property type="match status" value="1"/>
</dbReference>
<dbReference type="PANTHER" id="PTHR30111">
    <property type="entry name" value="33 KDA CHAPERONIN"/>
    <property type="match status" value="1"/>
</dbReference>
<dbReference type="PANTHER" id="PTHR30111:SF1">
    <property type="entry name" value="33 KDA CHAPERONIN"/>
    <property type="match status" value="1"/>
</dbReference>
<dbReference type="Pfam" id="PF01430">
    <property type="entry name" value="HSP33"/>
    <property type="match status" value="1"/>
</dbReference>
<dbReference type="PIRSF" id="PIRSF005261">
    <property type="entry name" value="Heat_shock_Hsp33"/>
    <property type="match status" value="1"/>
</dbReference>
<dbReference type="SUPFAM" id="SSF64397">
    <property type="entry name" value="Hsp33 domain"/>
    <property type="match status" value="1"/>
</dbReference>
<dbReference type="SUPFAM" id="SSF118352">
    <property type="entry name" value="HSP33 redox switch-like"/>
    <property type="match status" value="1"/>
</dbReference>
<evidence type="ECO:0000255" key="1">
    <source>
        <dbReference type="HAMAP-Rule" id="MF_00117"/>
    </source>
</evidence>
<keyword id="KW-0143">Chaperone</keyword>
<keyword id="KW-0963">Cytoplasm</keyword>
<keyword id="KW-1015">Disulfide bond</keyword>
<keyword id="KW-0676">Redox-active center</keyword>
<keyword id="KW-1185">Reference proteome</keyword>
<keyword id="KW-0862">Zinc</keyword>
<name>HSLO_PROM4</name>
<proteinExistence type="inferred from homology"/>
<organism>
    <name type="scientific">Prochlorococcus marinus (strain MIT 9211)</name>
    <dbReference type="NCBI Taxonomy" id="93059"/>
    <lineage>
        <taxon>Bacteria</taxon>
        <taxon>Bacillati</taxon>
        <taxon>Cyanobacteriota</taxon>
        <taxon>Cyanophyceae</taxon>
        <taxon>Synechococcales</taxon>
        <taxon>Prochlorococcaceae</taxon>
        <taxon>Prochlorococcus</taxon>
    </lineage>
</organism>
<reference key="1">
    <citation type="journal article" date="2007" name="PLoS Genet.">
        <title>Patterns and implications of gene gain and loss in the evolution of Prochlorococcus.</title>
        <authorList>
            <person name="Kettler G.C."/>
            <person name="Martiny A.C."/>
            <person name="Huang K."/>
            <person name="Zucker J."/>
            <person name="Coleman M.L."/>
            <person name="Rodrigue S."/>
            <person name="Chen F."/>
            <person name="Lapidus A."/>
            <person name="Ferriera S."/>
            <person name="Johnson J."/>
            <person name="Steglich C."/>
            <person name="Church G.M."/>
            <person name="Richardson P."/>
            <person name="Chisholm S.W."/>
        </authorList>
    </citation>
    <scope>NUCLEOTIDE SEQUENCE [LARGE SCALE GENOMIC DNA]</scope>
    <source>
        <strain>MIT 9211</strain>
    </source>
</reference>